<keyword id="KW-0066">ATP synthesis</keyword>
<keyword id="KW-0997">Cell inner membrane</keyword>
<keyword id="KW-1003">Cell membrane</keyword>
<keyword id="KW-0139">CF(1)</keyword>
<keyword id="KW-0375">Hydrogen ion transport</keyword>
<keyword id="KW-0406">Ion transport</keyword>
<keyword id="KW-0472">Membrane</keyword>
<keyword id="KW-0813">Transport</keyword>
<name>ATPD_RHIR8</name>
<accession>B9JBZ8</accession>
<reference key="1">
    <citation type="journal article" date="2009" name="J. Bacteriol.">
        <title>Genome sequences of three Agrobacterium biovars help elucidate the evolution of multichromosome genomes in bacteria.</title>
        <authorList>
            <person name="Slater S.C."/>
            <person name="Goldman B.S."/>
            <person name="Goodner B."/>
            <person name="Setubal J.C."/>
            <person name="Farrand S.K."/>
            <person name="Nester E.W."/>
            <person name="Burr T.J."/>
            <person name="Banta L."/>
            <person name="Dickerman A.W."/>
            <person name="Paulsen I."/>
            <person name="Otten L."/>
            <person name="Suen G."/>
            <person name="Welch R."/>
            <person name="Almeida N.F."/>
            <person name="Arnold F."/>
            <person name="Burton O.T."/>
            <person name="Du Z."/>
            <person name="Ewing A."/>
            <person name="Godsy E."/>
            <person name="Heisel S."/>
            <person name="Houmiel K.L."/>
            <person name="Jhaveri J."/>
            <person name="Lu J."/>
            <person name="Miller N.M."/>
            <person name="Norton S."/>
            <person name="Chen Q."/>
            <person name="Phoolcharoen W."/>
            <person name="Ohlin V."/>
            <person name="Ondrusek D."/>
            <person name="Pride N."/>
            <person name="Stricklin S.L."/>
            <person name="Sun J."/>
            <person name="Wheeler C."/>
            <person name="Wilson L."/>
            <person name="Zhu H."/>
            <person name="Wood D.W."/>
        </authorList>
    </citation>
    <scope>NUCLEOTIDE SEQUENCE [LARGE SCALE GENOMIC DNA]</scope>
    <source>
        <strain>K84 / ATCC BAA-868</strain>
    </source>
</reference>
<gene>
    <name evidence="1" type="primary">atpH</name>
    <name type="ordered locus">Arad_4310</name>
</gene>
<sequence>MPVADTSQHISGVAERYASSLFELALEEGAVPAVTADLDRFQAMLDDSGDLKRFISSPVFSAEEQVGAVQALATKAGFGAYFTNFLKVVAKNRRLFALPGMVKAFRIIAAQHRGEVSAEITSAHALTKAQENELKAALKGVTGKDVAIAVTVDPSILGGLIVKVGSRQIDTSLRTKLSTLKLALKEVG</sequence>
<organism>
    <name type="scientific">Rhizobium rhizogenes (strain K84 / ATCC BAA-868)</name>
    <name type="common">Agrobacterium radiobacter</name>
    <dbReference type="NCBI Taxonomy" id="311403"/>
    <lineage>
        <taxon>Bacteria</taxon>
        <taxon>Pseudomonadati</taxon>
        <taxon>Pseudomonadota</taxon>
        <taxon>Alphaproteobacteria</taxon>
        <taxon>Hyphomicrobiales</taxon>
        <taxon>Rhizobiaceae</taxon>
        <taxon>Rhizobium/Agrobacterium group</taxon>
        <taxon>Rhizobium</taxon>
    </lineage>
</organism>
<evidence type="ECO:0000255" key="1">
    <source>
        <dbReference type="HAMAP-Rule" id="MF_01416"/>
    </source>
</evidence>
<evidence type="ECO:0000305" key="2"/>
<protein>
    <recommendedName>
        <fullName evidence="1">ATP synthase subunit delta</fullName>
    </recommendedName>
    <alternativeName>
        <fullName evidence="1">ATP synthase F(1) sector subunit delta</fullName>
    </alternativeName>
    <alternativeName>
        <fullName evidence="1">F-type ATPase subunit delta</fullName>
        <shortName evidence="1">F-ATPase subunit delta</shortName>
    </alternativeName>
</protein>
<proteinExistence type="inferred from homology"/>
<feature type="chain" id="PRO_0000382050" description="ATP synthase subunit delta">
    <location>
        <begin position="1"/>
        <end position="188"/>
    </location>
</feature>
<comment type="function">
    <text evidence="1">F(1)F(0) ATP synthase produces ATP from ADP in the presence of a proton or sodium gradient. F-type ATPases consist of two structural domains, F(1) containing the extramembraneous catalytic core and F(0) containing the membrane proton channel, linked together by a central stalk and a peripheral stalk. During catalysis, ATP synthesis in the catalytic domain of F(1) is coupled via a rotary mechanism of the central stalk subunits to proton translocation.</text>
</comment>
<comment type="function">
    <text evidence="1">This protein is part of the stalk that links CF(0) to CF(1). It either transmits conformational changes from CF(0) to CF(1) or is implicated in proton conduction.</text>
</comment>
<comment type="subunit">
    <text evidence="1">F-type ATPases have 2 components, F(1) - the catalytic core - and F(0) - the membrane proton channel. F(1) has five subunits: alpha(3), beta(3), gamma(1), delta(1), epsilon(1). F(0) has three main subunits: a(1), b(2) and c(10-14). The alpha and beta chains form an alternating ring which encloses part of the gamma chain. F(1) is attached to F(0) by a central stalk formed by the gamma and epsilon chains, while a peripheral stalk is formed by the delta and b chains.</text>
</comment>
<comment type="subcellular location">
    <subcellularLocation>
        <location evidence="1">Cell inner membrane</location>
        <topology evidence="1">Peripheral membrane protein</topology>
    </subcellularLocation>
</comment>
<comment type="similarity">
    <text evidence="1">Belongs to the ATPase delta chain family.</text>
</comment>
<comment type="sequence caution" evidence="2">
    <conflict type="erroneous initiation">
        <sequence resource="EMBL-CDS" id="ACM28044"/>
    </conflict>
</comment>
<dbReference type="EMBL" id="CP000628">
    <property type="protein sequence ID" value="ACM28044.1"/>
    <property type="status" value="ALT_INIT"/>
    <property type="molecule type" value="Genomic_DNA"/>
</dbReference>
<dbReference type="RefSeq" id="WP_007690120.1">
    <property type="nucleotide sequence ID" value="NC_011985.1"/>
</dbReference>
<dbReference type="SMR" id="B9JBZ8"/>
<dbReference type="STRING" id="311403.Arad_4310"/>
<dbReference type="KEGG" id="ara:Arad_4310"/>
<dbReference type="eggNOG" id="COG0712">
    <property type="taxonomic scope" value="Bacteria"/>
</dbReference>
<dbReference type="HOGENOM" id="CLU_085114_0_1_5"/>
<dbReference type="Proteomes" id="UP000001600">
    <property type="component" value="Chromosome 1"/>
</dbReference>
<dbReference type="GO" id="GO:0005886">
    <property type="term" value="C:plasma membrane"/>
    <property type="evidence" value="ECO:0007669"/>
    <property type="project" value="UniProtKB-SubCell"/>
</dbReference>
<dbReference type="GO" id="GO:0045259">
    <property type="term" value="C:proton-transporting ATP synthase complex"/>
    <property type="evidence" value="ECO:0007669"/>
    <property type="project" value="UniProtKB-KW"/>
</dbReference>
<dbReference type="GO" id="GO:0046933">
    <property type="term" value="F:proton-transporting ATP synthase activity, rotational mechanism"/>
    <property type="evidence" value="ECO:0007669"/>
    <property type="project" value="UniProtKB-UniRule"/>
</dbReference>
<dbReference type="Gene3D" id="1.10.520.20">
    <property type="entry name" value="N-terminal domain of the delta subunit of the F1F0-ATP synthase"/>
    <property type="match status" value="1"/>
</dbReference>
<dbReference type="HAMAP" id="MF_01416">
    <property type="entry name" value="ATP_synth_delta_bact"/>
    <property type="match status" value="1"/>
</dbReference>
<dbReference type="InterPro" id="IPR026015">
    <property type="entry name" value="ATP_synth_OSCP/delta_N_sf"/>
</dbReference>
<dbReference type="InterPro" id="IPR020781">
    <property type="entry name" value="ATPase_OSCP/d_CS"/>
</dbReference>
<dbReference type="InterPro" id="IPR000711">
    <property type="entry name" value="ATPase_OSCP/dsu"/>
</dbReference>
<dbReference type="NCBIfam" id="TIGR01145">
    <property type="entry name" value="ATP_synt_delta"/>
    <property type="match status" value="1"/>
</dbReference>
<dbReference type="NCBIfam" id="NF004402">
    <property type="entry name" value="PRK05758.2-2"/>
    <property type="match status" value="1"/>
</dbReference>
<dbReference type="NCBIfam" id="NF004406">
    <property type="entry name" value="PRK05758.3-2"/>
    <property type="match status" value="1"/>
</dbReference>
<dbReference type="PANTHER" id="PTHR11910">
    <property type="entry name" value="ATP SYNTHASE DELTA CHAIN"/>
    <property type="match status" value="1"/>
</dbReference>
<dbReference type="Pfam" id="PF00213">
    <property type="entry name" value="OSCP"/>
    <property type="match status" value="1"/>
</dbReference>
<dbReference type="PRINTS" id="PR00125">
    <property type="entry name" value="ATPASEDELTA"/>
</dbReference>
<dbReference type="SUPFAM" id="SSF47928">
    <property type="entry name" value="N-terminal domain of the delta subunit of the F1F0-ATP synthase"/>
    <property type="match status" value="1"/>
</dbReference>
<dbReference type="PROSITE" id="PS00389">
    <property type="entry name" value="ATPASE_DELTA"/>
    <property type="match status" value="1"/>
</dbReference>